<name>LOLB_XYLFA</name>
<keyword id="KW-0998">Cell outer membrane</keyword>
<keyword id="KW-0143">Chaperone</keyword>
<keyword id="KW-0449">Lipoprotein</keyword>
<keyword id="KW-0472">Membrane</keyword>
<keyword id="KW-0564">Palmitate</keyword>
<keyword id="KW-0653">Protein transport</keyword>
<keyword id="KW-0732">Signal</keyword>
<keyword id="KW-0813">Transport</keyword>
<proteinExistence type="inferred from homology"/>
<protein>
    <recommendedName>
        <fullName>Outer-membrane lipoprotein LolB</fullName>
    </recommendedName>
</protein>
<accession>Q9PA74</accession>
<organism>
    <name type="scientific">Xylella fastidiosa (strain 9a5c)</name>
    <dbReference type="NCBI Taxonomy" id="160492"/>
    <lineage>
        <taxon>Bacteria</taxon>
        <taxon>Pseudomonadati</taxon>
        <taxon>Pseudomonadota</taxon>
        <taxon>Gammaproteobacteria</taxon>
        <taxon>Lysobacterales</taxon>
        <taxon>Lysobacteraceae</taxon>
        <taxon>Xylella</taxon>
    </lineage>
</organism>
<reference key="1">
    <citation type="journal article" date="2000" name="Nature">
        <title>The genome sequence of the plant pathogen Xylella fastidiosa.</title>
        <authorList>
            <person name="Simpson A.J.G."/>
            <person name="Reinach F.C."/>
            <person name="Arruda P."/>
            <person name="Abreu F.A."/>
            <person name="Acencio M."/>
            <person name="Alvarenga R."/>
            <person name="Alves L.M.C."/>
            <person name="Araya J.E."/>
            <person name="Baia G.S."/>
            <person name="Baptista C.S."/>
            <person name="Barros M.H."/>
            <person name="Bonaccorsi E.D."/>
            <person name="Bordin S."/>
            <person name="Bove J.M."/>
            <person name="Briones M.R.S."/>
            <person name="Bueno M.R.P."/>
            <person name="Camargo A.A."/>
            <person name="Camargo L.E.A."/>
            <person name="Carraro D.M."/>
            <person name="Carrer H."/>
            <person name="Colauto N.B."/>
            <person name="Colombo C."/>
            <person name="Costa F.F."/>
            <person name="Costa M.C.R."/>
            <person name="Costa-Neto C.M."/>
            <person name="Coutinho L.L."/>
            <person name="Cristofani M."/>
            <person name="Dias-Neto E."/>
            <person name="Docena C."/>
            <person name="El-Dorry H."/>
            <person name="Facincani A.P."/>
            <person name="Ferreira A.J.S."/>
            <person name="Ferreira V.C.A."/>
            <person name="Ferro J.A."/>
            <person name="Fraga J.S."/>
            <person name="Franca S.C."/>
            <person name="Franco M.C."/>
            <person name="Frohme M."/>
            <person name="Furlan L.R."/>
            <person name="Garnier M."/>
            <person name="Goldman G.H."/>
            <person name="Goldman M.H.S."/>
            <person name="Gomes S.L."/>
            <person name="Gruber A."/>
            <person name="Ho P.L."/>
            <person name="Hoheisel J.D."/>
            <person name="Junqueira M.L."/>
            <person name="Kemper E.L."/>
            <person name="Kitajima J.P."/>
            <person name="Krieger J.E."/>
            <person name="Kuramae E.E."/>
            <person name="Laigret F."/>
            <person name="Lambais M.R."/>
            <person name="Leite L.C.C."/>
            <person name="Lemos E.G.M."/>
            <person name="Lemos M.V.F."/>
            <person name="Lopes S.A."/>
            <person name="Lopes C.R."/>
            <person name="Machado J.A."/>
            <person name="Machado M.A."/>
            <person name="Madeira A.M.B.N."/>
            <person name="Madeira H.M.F."/>
            <person name="Marino C.L."/>
            <person name="Marques M.V."/>
            <person name="Martins E.A.L."/>
            <person name="Martins E.M.F."/>
            <person name="Matsukuma A.Y."/>
            <person name="Menck C.F.M."/>
            <person name="Miracca E.C."/>
            <person name="Miyaki C.Y."/>
            <person name="Monteiro-Vitorello C.B."/>
            <person name="Moon D.H."/>
            <person name="Nagai M.A."/>
            <person name="Nascimento A.L.T.O."/>
            <person name="Netto L.E.S."/>
            <person name="Nhani A. Jr."/>
            <person name="Nobrega F.G."/>
            <person name="Nunes L.R."/>
            <person name="Oliveira M.A."/>
            <person name="de Oliveira M.C."/>
            <person name="de Oliveira R.C."/>
            <person name="Palmieri D.A."/>
            <person name="Paris A."/>
            <person name="Peixoto B.R."/>
            <person name="Pereira G.A.G."/>
            <person name="Pereira H.A. Jr."/>
            <person name="Pesquero J.B."/>
            <person name="Quaggio R.B."/>
            <person name="Roberto P.G."/>
            <person name="Rodrigues V."/>
            <person name="de Rosa A.J.M."/>
            <person name="de Rosa V.E. Jr."/>
            <person name="de Sa R.G."/>
            <person name="Santelli R.V."/>
            <person name="Sawasaki H.E."/>
            <person name="da Silva A.C.R."/>
            <person name="da Silva A.M."/>
            <person name="da Silva F.R."/>
            <person name="Silva W.A. Jr."/>
            <person name="da Silveira J.F."/>
            <person name="Silvestri M.L.Z."/>
            <person name="Siqueira W.J."/>
            <person name="de Souza A.A."/>
            <person name="de Souza A.P."/>
            <person name="Terenzi M.F."/>
            <person name="Truffi D."/>
            <person name="Tsai S.M."/>
            <person name="Tsuhako M.H."/>
            <person name="Vallada H."/>
            <person name="Van Sluys M.A."/>
            <person name="Verjovski-Almeida S."/>
            <person name="Vettore A.L."/>
            <person name="Zago M.A."/>
            <person name="Zatz M."/>
            <person name="Meidanis J."/>
            <person name="Setubal J.C."/>
        </authorList>
    </citation>
    <scope>NUCLEOTIDE SEQUENCE [LARGE SCALE GENOMIC DNA]</scope>
    <source>
        <strain>9a5c</strain>
    </source>
</reference>
<dbReference type="EMBL" id="AE003849">
    <property type="protein sequence ID" value="AAF85443.1"/>
    <property type="molecule type" value="Genomic_DNA"/>
</dbReference>
<dbReference type="PIR" id="G82532">
    <property type="entry name" value="G82532"/>
</dbReference>
<dbReference type="RefSeq" id="WP_010895060.1">
    <property type="nucleotide sequence ID" value="NC_002488.3"/>
</dbReference>
<dbReference type="SMR" id="Q9PA74"/>
<dbReference type="STRING" id="160492.XF_2646"/>
<dbReference type="KEGG" id="xfa:XF_2646"/>
<dbReference type="eggNOG" id="COG3017">
    <property type="taxonomic scope" value="Bacteria"/>
</dbReference>
<dbReference type="HOGENOM" id="CLU_092816_3_1_6"/>
<dbReference type="Proteomes" id="UP000000812">
    <property type="component" value="Chromosome"/>
</dbReference>
<dbReference type="GO" id="GO:0009279">
    <property type="term" value="C:cell outer membrane"/>
    <property type="evidence" value="ECO:0007669"/>
    <property type="project" value="UniProtKB-SubCell"/>
</dbReference>
<dbReference type="GO" id="GO:0044874">
    <property type="term" value="P:lipoprotein localization to outer membrane"/>
    <property type="evidence" value="ECO:0007669"/>
    <property type="project" value="UniProtKB-UniRule"/>
</dbReference>
<dbReference type="GO" id="GO:0015031">
    <property type="term" value="P:protein transport"/>
    <property type="evidence" value="ECO:0007669"/>
    <property type="project" value="UniProtKB-KW"/>
</dbReference>
<dbReference type="CDD" id="cd16326">
    <property type="entry name" value="LolB"/>
    <property type="match status" value="1"/>
</dbReference>
<dbReference type="Gene3D" id="2.50.20.10">
    <property type="entry name" value="Lipoprotein localisation LolA/LolB/LppX"/>
    <property type="match status" value="1"/>
</dbReference>
<dbReference type="HAMAP" id="MF_00233">
    <property type="entry name" value="LolB"/>
    <property type="match status" value="1"/>
</dbReference>
<dbReference type="InterPro" id="IPR029046">
    <property type="entry name" value="LolA/LolB/LppX"/>
</dbReference>
<dbReference type="InterPro" id="IPR004565">
    <property type="entry name" value="OM_lipoprot_LolB"/>
</dbReference>
<dbReference type="NCBIfam" id="TIGR00548">
    <property type="entry name" value="lolB"/>
    <property type="match status" value="1"/>
</dbReference>
<dbReference type="Pfam" id="PF03550">
    <property type="entry name" value="LolB"/>
    <property type="match status" value="1"/>
</dbReference>
<dbReference type="SUPFAM" id="SSF89392">
    <property type="entry name" value="Prokaryotic lipoproteins and lipoprotein localization factors"/>
    <property type="match status" value="1"/>
</dbReference>
<evidence type="ECO:0000250" key="1"/>
<evidence type="ECO:0000255" key="2"/>
<evidence type="ECO:0000305" key="3"/>
<comment type="function">
    <text evidence="1">Plays a critical role in the incorporation of lipoproteins in the outer membrane after they are released by the LolA protein.</text>
</comment>
<comment type="subunit">
    <text evidence="1">Monomer.</text>
</comment>
<comment type="subcellular location">
    <subcellularLocation>
        <location evidence="1">Cell outer membrane</location>
        <topology evidence="1">Lipid-anchor</topology>
    </subcellularLocation>
</comment>
<comment type="similarity">
    <text evidence="3">Belongs to the LolB family.</text>
</comment>
<gene>
    <name type="primary">lolB</name>
    <name type="ordered locus">XF_2646</name>
</gene>
<feature type="signal peptide" evidence="2">
    <location>
        <begin position="1"/>
        <end position="25"/>
    </location>
</feature>
<feature type="chain" id="PRO_0000018320" description="Outer-membrane lipoprotein LolB">
    <location>
        <begin position="26"/>
        <end position="216"/>
    </location>
</feature>
<feature type="lipid moiety-binding region" description="N-palmitoyl cysteine" evidence="2">
    <location>
        <position position="26"/>
    </location>
</feature>
<feature type="lipid moiety-binding region" description="S-diacylglycerol cysteine" evidence="2">
    <location>
        <position position="26"/>
    </location>
</feature>
<sequence length="216" mass="23903">MTVYLHDVNRGLGVFLLVVSFLLPGCSSSGGRRASVPVMVDATAQVVEQARQTWLQEHPNWGFHGRAAISQGRDGGSVRVEWEQHGRGYRIVLSAPMSRQSWVLSGSSSGPARLEGVGGWVRVGEVAEQVLFEATGWQVPMGLLPDWVRGRNSGGGDVQLDAEGRPHRVYQRGWQLRFLDWFPSSVGRPVLPRQIEASRGSARIRLIVDQWDELIP</sequence>